<proteinExistence type="inferred from homology"/>
<reference key="1">
    <citation type="journal article" date="2004" name="Nat. Biotechnol.">
        <title>The genome sequence of the extreme thermophile Thermus thermophilus.</title>
        <authorList>
            <person name="Henne A."/>
            <person name="Brueggemann H."/>
            <person name="Raasch C."/>
            <person name="Wiezer A."/>
            <person name="Hartsch T."/>
            <person name="Liesegang H."/>
            <person name="Johann A."/>
            <person name="Lienard T."/>
            <person name="Gohl O."/>
            <person name="Martinez-Arias R."/>
            <person name="Jacobi C."/>
            <person name="Starkuviene V."/>
            <person name="Schlenczeck S."/>
            <person name="Dencker S."/>
            <person name="Huber R."/>
            <person name="Klenk H.-P."/>
            <person name="Kramer W."/>
            <person name="Merkl R."/>
            <person name="Gottschalk G."/>
            <person name="Fritz H.-J."/>
        </authorList>
    </citation>
    <scope>NUCLEOTIDE SEQUENCE [LARGE SCALE GENOMIC DNA]</scope>
    <source>
        <strain>ATCC BAA-163 / DSM 7039 / HB27</strain>
    </source>
</reference>
<protein>
    <recommendedName>
        <fullName evidence="1">Glycine cleavage system H protein</fullName>
    </recommendedName>
</protein>
<dbReference type="EMBL" id="AE017221">
    <property type="protein sequence ID" value="AAS80497.1"/>
    <property type="molecule type" value="Genomic_DNA"/>
</dbReference>
<dbReference type="RefSeq" id="WP_011172604.1">
    <property type="nucleotide sequence ID" value="NC_005835.1"/>
</dbReference>
<dbReference type="SMR" id="Q72LB0"/>
<dbReference type="KEGG" id="tth:TT_C0149"/>
<dbReference type="eggNOG" id="COG0509">
    <property type="taxonomic scope" value="Bacteria"/>
</dbReference>
<dbReference type="HOGENOM" id="CLU_097408_2_0_0"/>
<dbReference type="OrthoDB" id="9796712at2"/>
<dbReference type="Proteomes" id="UP000000592">
    <property type="component" value="Chromosome"/>
</dbReference>
<dbReference type="GO" id="GO:0005737">
    <property type="term" value="C:cytoplasm"/>
    <property type="evidence" value="ECO:0007669"/>
    <property type="project" value="TreeGrafter"/>
</dbReference>
<dbReference type="GO" id="GO:0005960">
    <property type="term" value="C:glycine cleavage complex"/>
    <property type="evidence" value="ECO:0007669"/>
    <property type="project" value="InterPro"/>
</dbReference>
<dbReference type="GO" id="GO:0019464">
    <property type="term" value="P:glycine decarboxylation via glycine cleavage system"/>
    <property type="evidence" value="ECO:0007669"/>
    <property type="project" value="UniProtKB-UniRule"/>
</dbReference>
<dbReference type="CDD" id="cd06848">
    <property type="entry name" value="GCS_H"/>
    <property type="match status" value="1"/>
</dbReference>
<dbReference type="Gene3D" id="2.40.50.100">
    <property type="match status" value="1"/>
</dbReference>
<dbReference type="HAMAP" id="MF_00272">
    <property type="entry name" value="GcvH"/>
    <property type="match status" value="1"/>
</dbReference>
<dbReference type="InterPro" id="IPR003016">
    <property type="entry name" value="2-oxoA_DH_lipoyl-BS"/>
</dbReference>
<dbReference type="InterPro" id="IPR000089">
    <property type="entry name" value="Biotin_lipoyl"/>
</dbReference>
<dbReference type="InterPro" id="IPR002930">
    <property type="entry name" value="GCV_H"/>
</dbReference>
<dbReference type="InterPro" id="IPR033753">
    <property type="entry name" value="GCV_H/Fam206"/>
</dbReference>
<dbReference type="InterPro" id="IPR017453">
    <property type="entry name" value="GCV_H_sub"/>
</dbReference>
<dbReference type="InterPro" id="IPR011053">
    <property type="entry name" value="Single_hybrid_motif"/>
</dbReference>
<dbReference type="NCBIfam" id="TIGR00527">
    <property type="entry name" value="gcvH"/>
    <property type="match status" value="1"/>
</dbReference>
<dbReference type="NCBIfam" id="NF002270">
    <property type="entry name" value="PRK01202.1"/>
    <property type="match status" value="1"/>
</dbReference>
<dbReference type="PANTHER" id="PTHR11715">
    <property type="entry name" value="GLYCINE CLEAVAGE SYSTEM H PROTEIN"/>
    <property type="match status" value="1"/>
</dbReference>
<dbReference type="PANTHER" id="PTHR11715:SF3">
    <property type="entry name" value="GLYCINE CLEAVAGE SYSTEM H PROTEIN-RELATED"/>
    <property type="match status" value="1"/>
</dbReference>
<dbReference type="Pfam" id="PF01597">
    <property type="entry name" value="GCV_H"/>
    <property type="match status" value="1"/>
</dbReference>
<dbReference type="SUPFAM" id="SSF51230">
    <property type="entry name" value="Single hybrid motif"/>
    <property type="match status" value="1"/>
</dbReference>
<dbReference type="PROSITE" id="PS50968">
    <property type="entry name" value="BIOTINYL_LIPOYL"/>
    <property type="match status" value="1"/>
</dbReference>
<dbReference type="PROSITE" id="PS00189">
    <property type="entry name" value="LIPOYL"/>
    <property type="match status" value="1"/>
</dbReference>
<feature type="chain" id="PRO_0000302457" description="Glycine cleavage system H protein">
    <location>
        <begin position="1"/>
        <end position="128"/>
    </location>
</feature>
<feature type="domain" description="Lipoyl-binding" evidence="2">
    <location>
        <begin position="22"/>
        <end position="104"/>
    </location>
</feature>
<feature type="modified residue" description="N6-lipoyllysine" evidence="1">
    <location>
        <position position="63"/>
    </location>
</feature>
<gene>
    <name evidence="1" type="primary">gcvH</name>
    <name type="ordered locus">TT_C0149</name>
</gene>
<organism>
    <name type="scientific">Thermus thermophilus (strain ATCC BAA-163 / DSM 7039 / HB27)</name>
    <dbReference type="NCBI Taxonomy" id="262724"/>
    <lineage>
        <taxon>Bacteria</taxon>
        <taxon>Thermotogati</taxon>
        <taxon>Deinococcota</taxon>
        <taxon>Deinococci</taxon>
        <taxon>Thermales</taxon>
        <taxon>Thermaceae</taxon>
        <taxon>Thermus</taxon>
    </lineage>
</organism>
<keyword id="KW-0450">Lipoyl</keyword>
<evidence type="ECO:0000255" key="1">
    <source>
        <dbReference type="HAMAP-Rule" id="MF_00272"/>
    </source>
</evidence>
<evidence type="ECO:0000255" key="2">
    <source>
        <dbReference type="PROSITE-ProRule" id="PRU01066"/>
    </source>
</evidence>
<name>GCSH_THET2</name>
<comment type="function">
    <text evidence="1">The glycine cleavage system catalyzes the degradation of glycine. The H protein shuttles the methylamine group of glycine from the P protein to the T protein.</text>
</comment>
<comment type="cofactor">
    <cofactor evidence="1">
        <name>(R)-lipoate</name>
        <dbReference type="ChEBI" id="CHEBI:83088"/>
    </cofactor>
    <text evidence="1">Binds 1 lipoyl cofactor covalently.</text>
</comment>
<comment type="subunit">
    <text evidence="1">The glycine cleavage system is composed of four proteins: P, T, L and H.</text>
</comment>
<comment type="similarity">
    <text evidence="1">Belongs to the GcvH family.</text>
</comment>
<sequence length="128" mass="14155">MDIPKDRFYTKTHEWALPEGDTVLVGITDYAQDALGDVVYVELPEVGRVVEKGEAVAVVESVKTASDIYAPVAGEIVEVNLALEKTPELVNQDPYGEGWIFRLKPRDMGDLDELLDAEGYQEVLESEA</sequence>
<accession>Q72LB0</accession>